<dbReference type="EMBL" id="M34041">
    <property type="protein sequence ID" value="AAA51666.1"/>
    <property type="molecule type" value="Genomic_DNA"/>
</dbReference>
<dbReference type="EMBL" id="AF316895">
    <property type="protein sequence ID" value="AAK01635.1"/>
    <property type="molecule type" value="Genomic_DNA"/>
</dbReference>
<dbReference type="EMBL" id="AF005900">
    <property type="protein sequence ID" value="AAB62558.1"/>
    <property type="molecule type" value="Genomic_DNA"/>
</dbReference>
<dbReference type="EMBL" id="AY548167">
    <property type="protein sequence ID" value="AAS55646.1"/>
    <property type="molecule type" value="Genomic_DNA"/>
</dbReference>
<dbReference type="EMBL" id="DQ057076">
    <property type="protein sequence ID" value="AAY43127.1"/>
    <property type="molecule type" value="Genomic_DNA"/>
</dbReference>
<dbReference type="EMBL" id="EU332847">
    <property type="protein sequence ID" value="ABY87536.1"/>
    <property type="molecule type" value="Genomic_DNA"/>
</dbReference>
<dbReference type="EMBL" id="AC092603">
    <property type="protein sequence ID" value="AAX93218.1"/>
    <property type="molecule type" value="Genomic_DNA"/>
</dbReference>
<dbReference type="EMBL" id="KF573706">
    <property type="status" value="NOT_ANNOTATED_CDS"/>
    <property type="molecule type" value="Genomic_DNA"/>
</dbReference>
<dbReference type="EMBL" id="CH471207">
    <property type="protein sequence ID" value="EAW71390.1"/>
    <property type="molecule type" value="Genomic_DNA"/>
</dbReference>
<dbReference type="EMBL" id="BC133021">
    <property type="protein sequence ID" value="AAI33022.1"/>
    <property type="molecule type" value="mRNA"/>
</dbReference>
<dbReference type="EMBL" id="BC136537">
    <property type="protein sequence ID" value="AAI36538.1"/>
    <property type="molecule type" value="mRNA"/>
</dbReference>
<dbReference type="EMBL" id="M38742">
    <property type="protein sequence ID" value="AAA62823.1"/>
    <property type="molecule type" value="Genomic_DNA"/>
</dbReference>
<dbReference type="CCDS" id="CCDS56129.1"/>
<dbReference type="PIR" id="A37223">
    <property type="entry name" value="A37223"/>
</dbReference>
<dbReference type="RefSeq" id="NP_000673.2">
    <property type="nucleotide sequence ID" value="NM_000682.6"/>
</dbReference>
<dbReference type="PDB" id="6K41">
    <property type="method" value="EM"/>
    <property type="resolution" value="2.90 A"/>
    <property type="chains" value="R=9-450"/>
</dbReference>
<dbReference type="PDB" id="6K42">
    <property type="method" value="EM"/>
    <property type="resolution" value="4.10 A"/>
    <property type="chains" value="R=7-450"/>
</dbReference>
<dbReference type="PDBsum" id="6K41"/>
<dbReference type="PDBsum" id="6K42"/>
<dbReference type="EMDB" id="EMD-9911"/>
<dbReference type="EMDB" id="EMD-9912"/>
<dbReference type="SMR" id="P18089"/>
<dbReference type="BioGRID" id="106660">
    <property type="interactions" value="7"/>
</dbReference>
<dbReference type="CORUM" id="P18089"/>
<dbReference type="DIP" id="DIP-61453N"/>
<dbReference type="FunCoup" id="P18089">
    <property type="interactions" value="1181"/>
</dbReference>
<dbReference type="IntAct" id="P18089">
    <property type="interactions" value="5"/>
</dbReference>
<dbReference type="STRING" id="9606.ENSP00000480573"/>
<dbReference type="BindingDB" id="P18089"/>
<dbReference type="ChEMBL" id="CHEMBL1942"/>
<dbReference type="DrugBank" id="DB08550">
    <property type="generic name" value="7,8-Dichloro-1,2,3,4-tetrahydroisoquinoline"/>
</dbReference>
<dbReference type="DrugBank" id="DB00543">
    <property type="generic name" value="Amoxapine"/>
</dbReference>
<dbReference type="DrugBank" id="DB00182">
    <property type="generic name" value="Amphetamine"/>
</dbReference>
<dbReference type="DrugBank" id="DB00714">
    <property type="generic name" value="Apomorphine"/>
</dbReference>
<dbReference type="DrugBank" id="DB00964">
    <property type="generic name" value="Apraclonidine"/>
</dbReference>
<dbReference type="DrugBank" id="DB09229">
    <property type="generic name" value="Aranidipine"/>
</dbReference>
<dbReference type="DrugBank" id="DB01238">
    <property type="generic name" value="Aripiprazole"/>
</dbReference>
<dbReference type="DrugBank" id="DB14185">
    <property type="generic name" value="Aripiprazole lauroxil"/>
</dbReference>
<dbReference type="DrugBank" id="DB06216">
    <property type="generic name" value="Asenapine"/>
</dbReference>
<dbReference type="DrugBank" id="DB00217">
    <property type="generic name" value="Bethanidine"/>
</dbReference>
<dbReference type="DrugBank" id="DB00484">
    <property type="generic name" value="Brimonidine"/>
</dbReference>
<dbReference type="DrugBank" id="DB01200">
    <property type="generic name" value="Bromocriptine"/>
</dbReference>
<dbReference type="DrugBank" id="DB00248">
    <property type="generic name" value="Cabergoline"/>
</dbReference>
<dbReference type="DrugBank" id="DB01136">
    <property type="generic name" value="Carvedilol"/>
</dbReference>
<dbReference type="DrugBank" id="DB04846">
    <property type="generic name" value="Celiprolol"/>
</dbReference>
<dbReference type="DrugBank" id="DB00477">
    <property type="generic name" value="Chlorpromazine"/>
</dbReference>
<dbReference type="DrugBank" id="DB09202">
    <property type="generic name" value="Cirazoline"/>
</dbReference>
<dbReference type="DrugBank" id="DB00575">
    <property type="generic name" value="Clonidine"/>
</dbReference>
<dbReference type="DrugBank" id="DB00363">
    <property type="generic name" value="Clozapine"/>
</dbReference>
<dbReference type="DrugBank" id="DB01151">
    <property type="generic name" value="Desipramine"/>
</dbReference>
<dbReference type="DrugBank" id="DB01576">
    <property type="generic name" value="Dextroamphetamine"/>
</dbReference>
<dbReference type="DrugBank" id="DB11273">
    <property type="generic name" value="Dihydroergocornine"/>
</dbReference>
<dbReference type="DrugBank" id="DB13345">
    <property type="generic name" value="Dihydroergocristine"/>
</dbReference>
<dbReference type="DrugBank" id="DB00320">
    <property type="generic name" value="Dihydroergotamine"/>
</dbReference>
<dbReference type="DrugBank" id="DB11278">
    <property type="generic name" value="DL-Methylephedrine"/>
</dbReference>
<dbReference type="DrugBank" id="DB09167">
    <property type="generic name" value="Dosulepin"/>
</dbReference>
<dbReference type="DrugBank" id="DB04855">
    <property type="generic name" value="Dronedarone"/>
</dbReference>
<dbReference type="DrugBank" id="DB06262">
    <property type="generic name" value="Droxidopa"/>
</dbReference>
<dbReference type="DrugBank" id="DB01363">
    <property type="generic name" value="Ephedra sinica root"/>
</dbReference>
<dbReference type="DrugBank" id="DB05492">
    <property type="generic name" value="Epicept NP-1"/>
</dbReference>
<dbReference type="DrugBank" id="DB00668">
    <property type="generic name" value="Epinephrine"/>
</dbReference>
<dbReference type="DrugBank" id="DB01049">
    <property type="generic name" value="Ergoloid mesylate"/>
</dbReference>
<dbReference type="DrugBank" id="DB01175">
    <property type="generic name" value="Escitalopram"/>
</dbReference>
<dbReference type="DrugBank" id="DB06678">
    <property type="generic name" value="Esmirtazapine"/>
</dbReference>
<dbReference type="DrugBank" id="DB00292">
    <property type="generic name" value="Etomidate"/>
</dbReference>
<dbReference type="DrugBank" id="DB09194">
    <property type="generic name" value="Etoperidone"/>
</dbReference>
<dbReference type="DrugBank" id="DB00800">
    <property type="generic name" value="Fenoldopam"/>
</dbReference>
<dbReference type="DrugBank" id="DB00629">
    <property type="generic name" value="Guanabenz"/>
</dbReference>
<dbReference type="DrugBank" id="DB01018">
    <property type="generic name" value="Guanfacine"/>
</dbReference>
<dbReference type="DrugBank" id="DB00502">
    <property type="generic name" value="Haloperidol"/>
</dbReference>
<dbReference type="DrugBank" id="DB04946">
    <property type="generic name" value="Iloperidone"/>
</dbReference>
<dbReference type="DrugBank" id="DB11577">
    <property type="generic name" value="Indigotindisulfonic acid"/>
</dbReference>
<dbReference type="DrugBank" id="DB08950">
    <property type="generic name" value="Indoramin"/>
</dbReference>
<dbReference type="DrugBank" id="DB06707">
    <property type="generic name" value="Levonordefrin"/>
</dbReference>
<dbReference type="DrugBank" id="DB00589">
    <property type="generic name" value="Lisuride"/>
</dbReference>
<dbReference type="DrugBank" id="DB09195">
    <property type="generic name" value="Lorpiprazole"/>
</dbReference>
<dbReference type="DrugBank" id="DB00408">
    <property type="generic name" value="Loxapine"/>
</dbReference>
<dbReference type="DrugBank" id="DB00934">
    <property type="generic name" value="Maprotiline"/>
</dbReference>
<dbReference type="DrugBank" id="DB11428">
    <property type="generic name" value="Medetomidine"/>
</dbReference>
<dbReference type="DrugBank" id="DB01365">
    <property type="generic name" value="Mephentermine"/>
</dbReference>
<dbReference type="DrugBank" id="DB01577">
    <property type="generic name" value="Metamfetamine"/>
</dbReference>
<dbReference type="DrugBank" id="DB01403">
    <property type="generic name" value="Methotrimeprazine"/>
</dbReference>
<dbReference type="DrugBank" id="DB06148">
    <property type="generic name" value="Mianserin"/>
</dbReference>
<dbReference type="DrugBank" id="DB09205">
    <property type="generic name" value="Moxisylyte"/>
</dbReference>
<dbReference type="DrugBank" id="DB09242">
    <property type="generic name" value="Moxonidine"/>
</dbReference>
<dbReference type="DrugBank" id="DB00368">
    <property type="generic name" value="Norepinephrine"/>
</dbReference>
<dbReference type="DrugBank" id="DB00540">
    <property type="generic name" value="Nortriptyline"/>
</dbReference>
<dbReference type="DrugBank" id="DB06229">
    <property type="generic name" value="Ocaperidone"/>
</dbReference>
<dbReference type="DrugBank" id="DB05461">
    <property type="generic name" value="OPC-28326"/>
</dbReference>
<dbReference type="DrugBank" id="DB00935">
    <property type="generic name" value="Oxymetazoline"/>
</dbReference>
<dbReference type="DrugBank" id="DB01267">
    <property type="generic name" value="Paliperidone"/>
</dbReference>
<dbReference type="DrugBank" id="DB00715">
    <property type="generic name" value="Paroxetine"/>
</dbReference>
<dbReference type="DrugBank" id="DB01186">
    <property type="generic name" value="Pergolide"/>
</dbReference>
<dbReference type="DrugBank" id="DB00925">
    <property type="generic name" value="Phenoxybenzamine"/>
</dbReference>
<dbReference type="DrugBank" id="DB00692">
    <property type="generic name" value="Phentolamine"/>
</dbReference>
<dbReference type="DrugBank" id="DB00397">
    <property type="generic name" value="Phenylpropanolamine"/>
</dbReference>
<dbReference type="DrugBank" id="DB06153">
    <property type="generic name" value="Pizotifen"/>
</dbReference>
<dbReference type="DrugBank" id="DB00457">
    <property type="generic name" value="Prazosin"/>
</dbReference>
<dbReference type="DrugBank" id="DB00433">
    <property type="generic name" value="Prochlorperazine"/>
</dbReference>
<dbReference type="DrugBank" id="DB01069">
    <property type="generic name" value="Promethazine"/>
</dbReference>
<dbReference type="DrugBank" id="DB01224">
    <property type="generic name" value="Quetiapine"/>
</dbReference>
<dbReference type="DrugBank" id="DB11124">
    <property type="generic name" value="Racepinephrine"/>
</dbReference>
<dbReference type="DrugBank" id="DB00734">
    <property type="generic name" value="Risperidone"/>
</dbReference>
<dbReference type="DrugBank" id="DB00268">
    <property type="generic name" value="Ropinirole"/>
</dbReference>
<dbReference type="DrugBank" id="DB05271">
    <property type="generic name" value="Rotigotine"/>
</dbReference>
<dbReference type="DrugBank" id="DB09304">
    <property type="generic name" value="Setiptiline"/>
</dbReference>
<dbReference type="DrugBank" id="DB06764">
    <property type="generic name" value="Tetryzoline"/>
</dbReference>
<dbReference type="DrugBank" id="DB13025">
    <property type="generic name" value="Tiapride"/>
</dbReference>
<dbReference type="DrugBank" id="DB00697">
    <property type="generic name" value="Tizanidine"/>
</dbReference>
<dbReference type="DrugBank" id="DB00797">
    <property type="generic name" value="Tolazoline"/>
</dbReference>
<dbReference type="DrugBank" id="DB00193">
    <property type="generic name" value="Tramadol"/>
</dbReference>
<dbReference type="DrugBank" id="DB13064">
    <property type="generic name" value="Tramazoline"/>
</dbReference>
<dbReference type="DrugBank" id="DB00726">
    <property type="generic name" value="Trimipramine"/>
</dbReference>
<dbReference type="DrugBank" id="DB11477">
    <property type="generic name" value="Xylazine"/>
</dbReference>
<dbReference type="DrugBank" id="DB06694">
    <property type="generic name" value="Xylometazoline"/>
</dbReference>
<dbReference type="DrugBank" id="DB01392">
    <property type="generic name" value="Yohimbine"/>
</dbReference>
<dbReference type="DrugBank" id="DB00246">
    <property type="generic name" value="Ziprasidone"/>
</dbReference>
<dbReference type="DrugCentral" id="P18089"/>
<dbReference type="GuidetoPHARMACOLOGY" id="26"/>
<dbReference type="PhosphoSitePlus" id="P18089"/>
<dbReference type="BioMuta" id="ADRA2B"/>
<dbReference type="DMDM" id="27151763"/>
<dbReference type="MassIVE" id="P18089"/>
<dbReference type="PaxDb" id="9606-ENSP00000480573"/>
<dbReference type="PeptideAtlas" id="P18089"/>
<dbReference type="ProteomicsDB" id="53548"/>
<dbReference type="Antibodypedia" id="72874">
    <property type="antibodies" value="135 antibodies from 27 providers"/>
</dbReference>
<dbReference type="DNASU" id="151"/>
<dbReference type="Ensembl" id="ENST00000620793.2">
    <property type="protein sequence ID" value="ENSP00000480573.1"/>
    <property type="gene ID" value="ENSG00000274286.2"/>
</dbReference>
<dbReference type="GeneID" id="151"/>
<dbReference type="KEGG" id="hsa:151"/>
<dbReference type="MANE-Select" id="ENST00000620793.2">
    <property type="protein sequence ID" value="ENSP00000480573.1"/>
    <property type="RefSeq nucleotide sequence ID" value="NM_000682.7"/>
    <property type="RefSeq protein sequence ID" value="NP_000673.2"/>
</dbReference>
<dbReference type="UCSC" id="uc032nvj.2">
    <property type="organism name" value="human"/>
</dbReference>
<dbReference type="AGR" id="HGNC:282"/>
<dbReference type="CTD" id="151"/>
<dbReference type="DisGeNET" id="151"/>
<dbReference type="GeneCards" id="ADRA2B"/>
<dbReference type="HGNC" id="HGNC:282">
    <property type="gene designation" value="ADRA2B"/>
</dbReference>
<dbReference type="HPA" id="ENSG00000274286">
    <property type="expression patterns" value="Low tissue specificity"/>
</dbReference>
<dbReference type="MalaCards" id="ADRA2B"/>
<dbReference type="MIM" id="104260">
    <property type="type" value="gene"/>
</dbReference>
<dbReference type="MIM" id="607876">
    <property type="type" value="phenotype"/>
</dbReference>
<dbReference type="neXtProt" id="NX_P18089"/>
<dbReference type="OpenTargets" id="ENSG00000274286"/>
<dbReference type="Orphanet" id="86814">
    <property type="disease" value="Familialadult myoclonic epilepsy"/>
</dbReference>
<dbReference type="PharmGKB" id="PA36"/>
<dbReference type="VEuPathDB" id="HostDB:ENSG00000274286"/>
<dbReference type="eggNOG" id="KOG3656">
    <property type="taxonomic scope" value="Eukaryota"/>
</dbReference>
<dbReference type="GeneTree" id="ENSGT00940000161915"/>
<dbReference type="InParanoid" id="P18089"/>
<dbReference type="OMA" id="ANPWKRK"/>
<dbReference type="OrthoDB" id="5975661at2759"/>
<dbReference type="PAN-GO" id="P18089">
    <property type="GO annotations" value="4 GO annotations based on evolutionary models"/>
</dbReference>
<dbReference type="PhylomeDB" id="P18089"/>
<dbReference type="TreeFam" id="TF316350"/>
<dbReference type="PathwayCommons" id="P18089"/>
<dbReference type="Reactome" id="R-HSA-390696">
    <property type="pathway name" value="Adrenoceptors"/>
</dbReference>
<dbReference type="Reactome" id="R-HSA-392023">
    <property type="pathway name" value="Adrenaline signalling through Alpha-2 adrenergic receptor"/>
</dbReference>
<dbReference type="Reactome" id="R-HSA-418594">
    <property type="pathway name" value="G alpha (i) signalling events"/>
</dbReference>
<dbReference type="Reactome" id="R-HSA-418597">
    <property type="pathway name" value="G alpha (z) signalling events"/>
</dbReference>
<dbReference type="SignaLink" id="P18089"/>
<dbReference type="SIGNOR" id="P18089"/>
<dbReference type="BioGRID-ORCS" id="151">
    <property type="hits" value="11 hits in 1156 CRISPR screens"/>
</dbReference>
<dbReference type="ChiTaRS" id="ADRA2B">
    <property type="organism name" value="human"/>
</dbReference>
<dbReference type="GeneWiki" id="Alpha-2B_adrenergic_receptor"/>
<dbReference type="GenomeRNAi" id="151"/>
<dbReference type="Pharos" id="P18089">
    <property type="development level" value="Tclin"/>
</dbReference>
<dbReference type="PRO" id="PR:P18089"/>
<dbReference type="Proteomes" id="UP000005640">
    <property type="component" value="Chromosome 2"/>
</dbReference>
<dbReference type="RNAct" id="P18089">
    <property type="molecule type" value="protein"/>
</dbReference>
<dbReference type="Bgee" id="ENSG00000274286">
    <property type="expression patterns" value="Expressed in apex of heart and 97 other cell types or tissues"/>
</dbReference>
<dbReference type="GO" id="GO:0009986">
    <property type="term" value="C:cell surface"/>
    <property type="evidence" value="ECO:0000314"/>
    <property type="project" value="UniProtKB"/>
</dbReference>
<dbReference type="GO" id="GO:0005829">
    <property type="term" value="C:cytosol"/>
    <property type="evidence" value="ECO:0000314"/>
    <property type="project" value="HPA"/>
</dbReference>
<dbReference type="GO" id="GO:0043231">
    <property type="term" value="C:intracellular membrane-bounded organelle"/>
    <property type="evidence" value="ECO:0000314"/>
    <property type="project" value="HPA"/>
</dbReference>
<dbReference type="GO" id="GO:0005886">
    <property type="term" value="C:plasma membrane"/>
    <property type="evidence" value="ECO:0000318"/>
    <property type="project" value="GO_Central"/>
</dbReference>
<dbReference type="GO" id="GO:0004938">
    <property type="term" value="F:alpha2-adrenergic receptor activity"/>
    <property type="evidence" value="ECO:0000314"/>
    <property type="project" value="BHF-UCL"/>
</dbReference>
<dbReference type="GO" id="GO:0051379">
    <property type="term" value="F:epinephrine binding"/>
    <property type="evidence" value="ECO:0000314"/>
    <property type="project" value="BHF-UCL"/>
</dbReference>
<dbReference type="GO" id="GO:0071875">
    <property type="term" value="P:adrenergic receptor signaling pathway"/>
    <property type="evidence" value="ECO:0000314"/>
    <property type="project" value="BHF-UCL"/>
</dbReference>
<dbReference type="GO" id="GO:0007267">
    <property type="term" value="P:cell-cell signaling"/>
    <property type="evidence" value="ECO:0000304"/>
    <property type="project" value="ProtInc"/>
</dbReference>
<dbReference type="GO" id="GO:0007565">
    <property type="term" value="P:female pregnancy"/>
    <property type="evidence" value="ECO:0007669"/>
    <property type="project" value="Ensembl"/>
</dbReference>
<dbReference type="GO" id="GO:0007186">
    <property type="term" value="P:G protein-coupled receptor signaling pathway"/>
    <property type="evidence" value="ECO:0000314"/>
    <property type="project" value="BHF-UCL"/>
</dbReference>
<dbReference type="GO" id="GO:0032811">
    <property type="term" value="P:negative regulation of epinephrine secretion"/>
    <property type="evidence" value="ECO:0000303"/>
    <property type="project" value="BHF-UCL"/>
</dbReference>
<dbReference type="GO" id="GO:0010700">
    <property type="term" value="P:negative regulation of norepinephrine secretion"/>
    <property type="evidence" value="ECO:0000304"/>
    <property type="project" value="BHF-UCL"/>
</dbReference>
<dbReference type="GO" id="GO:0030168">
    <property type="term" value="P:platelet activation"/>
    <property type="evidence" value="ECO:0007669"/>
    <property type="project" value="InterPro"/>
</dbReference>
<dbReference type="GO" id="GO:0045777">
    <property type="term" value="P:positive regulation of blood pressure"/>
    <property type="evidence" value="ECO:0007669"/>
    <property type="project" value="Ensembl"/>
</dbReference>
<dbReference type="GO" id="GO:0043410">
    <property type="term" value="P:positive regulation of MAPK cascade"/>
    <property type="evidence" value="ECO:0000314"/>
    <property type="project" value="BHF-UCL"/>
</dbReference>
<dbReference type="GO" id="GO:0045666">
    <property type="term" value="P:positive regulation of neuron differentiation"/>
    <property type="evidence" value="ECO:0000314"/>
    <property type="project" value="BHF-UCL"/>
</dbReference>
<dbReference type="GO" id="GO:0051897">
    <property type="term" value="P:positive regulation of phosphatidylinositol 3-kinase/protein kinase B signal transduction"/>
    <property type="evidence" value="ECO:0000314"/>
    <property type="project" value="BHF-UCL"/>
</dbReference>
<dbReference type="GO" id="GO:0070474">
    <property type="term" value="P:positive regulation of uterine smooth muscle contraction"/>
    <property type="evidence" value="ECO:0007669"/>
    <property type="project" value="Ensembl"/>
</dbReference>
<dbReference type="GO" id="GO:0003056">
    <property type="term" value="P:regulation of vascular associated smooth muscle contraction"/>
    <property type="evidence" value="ECO:0007669"/>
    <property type="project" value="Ensembl"/>
</dbReference>
<dbReference type="CDD" id="cd15321">
    <property type="entry name" value="7tmA_alpha2B_AR"/>
    <property type="match status" value="1"/>
</dbReference>
<dbReference type="FunFam" id="1.20.1070.10:FF:000185">
    <property type="entry name" value="Alpha-2B adrenergic receptor"/>
    <property type="match status" value="1"/>
</dbReference>
<dbReference type="FunFam" id="1.20.1070.10:FF:000100">
    <property type="entry name" value="alpha-2B adrenergic receptor"/>
    <property type="match status" value="1"/>
</dbReference>
<dbReference type="Gene3D" id="1.20.1070.10">
    <property type="entry name" value="Rhodopsin 7-helix transmembrane proteins"/>
    <property type="match status" value="2"/>
</dbReference>
<dbReference type="InterPro" id="IPR002233">
    <property type="entry name" value="ADR_fam"/>
</dbReference>
<dbReference type="InterPro" id="IPR000207">
    <property type="entry name" value="ADRA2B_rcpt"/>
</dbReference>
<dbReference type="InterPro" id="IPR000276">
    <property type="entry name" value="GPCR_Rhodpsn"/>
</dbReference>
<dbReference type="InterPro" id="IPR017452">
    <property type="entry name" value="GPCR_Rhodpsn_7TM"/>
</dbReference>
<dbReference type="PANTHER" id="PTHR24248">
    <property type="entry name" value="ADRENERGIC RECEPTOR-RELATED G-PROTEIN COUPLED RECEPTOR"/>
    <property type="match status" value="1"/>
</dbReference>
<dbReference type="PANTHER" id="PTHR24248:SF130">
    <property type="entry name" value="ALPHA-2B ADRENERGIC RECEPTOR"/>
    <property type="match status" value="1"/>
</dbReference>
<dbReference type="Pfam" id="PF00001">
    <property type="entry name" value="7tm_1"/>
    <property type="match status" value="1"/>
</dbReference>
<dbReference type="PRINTS" id="PR01103">
    <property type="entry name" value="ADRENERGICR"/>
</dbReference>
<dbReference type="PRINTS" id="PR00559">
    <property type="entry name" value="ADRENRGCA2BR"/>
</dbReference>
<dbReference type="PRINTS" id="PR00237">
    <property type="entry name" value="GPCRRHODOPSN"/>
</dbReference>
<dbReference type="SMART" id="SM01381">
    <property type="entry name" value="7TM_GPCR_Srsx"/>
    <property type="match status" value="1"/>
</dbReference>
<dbReference type="SUPFAM" id="SSF81321">
    <property type="entry name" value="Family A G protein-coupled receptor-like"/>
    <property type="match status" value="1"/>
</dbReference>
<dbReference type="PROSITE" id="PS00237">
    <property type="entry name" value="G_PROTEIN_RECEP_F1_1"/>
    <property type="match status" value="1"/>
</dbReference>
<dbReference type="PROSITE" id="PS50262">
    <property type="entry name" value="G_PROTEIN_RECEP_F1_2"/>
    <property type="match status" value="1"/>
</dbReference>
<protein>
    <recommendedName>
        <fullName>Alpha-2B adrenergic receptor</fullName>
    </recommendedName>
    <alternativeName>
        <fullName>Alpha-2 adrenergic receptor subtype C2</fullName>
    </alternativeName>
    <alternativeName>
        <fullName>Alpha-2B adrenoreceptor</fullName>
        <shortName>Alpha-2B adrenoceptor</shortName>
        <shortName>Alpha-2BAR</shortName>
    </alternativeName>
</protein>
<feature type="chain" id="PRO_0000069094" description="Alpha-2B adrenergic receptor">
    <location>
        <begin position="1"/>
        <end position="450"/>
    </location>
</feature>
<feature type="topological domain" description="Extracellular" evidence="1">
    <location>
        <begin position="1"/>
        <end position="12"/>
    </location>
</feature>
<feature type="transmembrane region" description="Helical; Name=1" evidence="1">
    <location>
        <begin position="13"/>
        <end position="38"/>
    </location>
</feature>
<feature type="topological domain" description="Cytoplasmic" evidence="1">
    <location>
        <begin position="39"/>
        <end position="48"/>
    </location>
</feature>
<feature type="transmembrane region" description="Helical; Name=2" evidence="1">
    <location>
        <begin position="49"/>
        <end position="69"/>
    </location>
</feature>
<feature type="topological domain" description="Extracellular" evidence="1">
    <location>
        <begin position="70"/>
        <end position="86"/>
    </location>
</feature>
<feature type="transmembrane region" description="Helical; Name=3" evidence="1">
    <location>
        <begin position="87"/>
        <end position="107"/>
    </location>
</feature>
<feature type="topological domain" description="Cytoplasmic" evidence="1">
    <location>
        <begin position="108"/>
        <end position="128"/>
    </location>
</feature>
<feature type="transmembrane region" description="Helical; Name=4" evidence="1">
    <location>
        <begin position="129"/>
        <end position="149"/>
    </location>
</feature>
<feature type="topological domain" description="Extracellular" evidence="1">
    <location>
        <begin position="150"/>
        <end position="172"/>
    </location>
</feature>
<feature type="transmembrane region" description="Helical; Name=5" evidence="1">
    <location>
        <begin position="173"/>
        <end position="193"/>
    </location>
</feature>
<feature type="topological domain" description="Cytoplasmic" evidence="1">
    <location>
        <begin position="194"/>
        <end position="368"/>
    </location>
</feature>
<feature type="transmembrane region" description="Helical; Name=6" evidence="1">
    <location>
        <begin position="369"/>
        <end position="389"/>
    </location>
</feature>
<feature type="topological domain" description="Extracellular" evidence="1">
    <location>
        <begin position="390"/>
        <end position="405"/>
    </location>
</feature>
<feature type="transmembrane region" description="Helical; Name=7" evidence="1">
    <location>
        <begin position="406"/>
        <end position="426"/>
    </location>
</feature>
<feature type="topological domain" description="Cytoplasmic" evidence="1">
    <location>
        <begin position="427"/>
        <end position="450"/>
    </location>
</feature>
<feature type="region of interest" description="Disordered" evidence="4">
    <location>
        <begin position="204"/>
        <end position="229"/>
    </location>
</feature>
<feature type="region of interest" description="Disordered" evidence="4">
    <location>
        <begin position="241"/>
        <end position="329"/>
    </location>
</feature>
<feature type="compositionally biased region" description="Basic and acidic residues" evidence="4">
    <location>
        <begin position="246"/>
        <end position="256"/>
    </location>
</feature>
<feature type="compositionally biased region" description="Acidic residues" evidence="4">
    <location>
        <begin position="293"/>
        <end position="311"/>
    </location>
</feature>
<feature type="compositionally biased region" description="Low complexity" evidence="4">
    <location>
        <begin position="312"/>
        <end position="326"/>
    </location>
</feature>
<feature type="site" description="Implicated in ligand binding" evidence="1">
    <location>
        <position position="92"/>
    </location>
</feature>
<feature type="site" description="Implicated in catechol agonist binding" evidence="1">
    <location>
        <position position="176"/>
    </location>
</feature>
<feature type="site" description="Implicated in catechol agonist binding" evidence="1">
    <location>
        <position position="180"/>
    </location>
</feature>
<feature type="lipid moiety-binding region" description="S-palmitoyl cysteine" evidence="2">
    <location>
        <position position="442"/>
    </location>
</feature>
<feature type="disulfide bond" evidence="3">
    <location>
        <begin position="85"/>
        <end position="164"/>
    </location>
</feature>
<feature type="sequence variant" id="VAR_025099" description="In dbSNP:rs9333568." evidence="11">
    <original>G</original>
    <variation>A</variation>
    <location>
        <position position="211"/>
    </location>
</feature>
<feature type="sequence variant" id="VAR_073953" description="In FAME2; gain of function; decreases interaction with PPP1R9B upon activation by neurotransmitter." evidence="8">
    <original>HGGAL</original>
    <variation>QFGR</variation>
    <location>
        <begin position="225"/>
        <end position="229"/>
    </location>
</feature>
<feature type="sequence variant" id="VAR_070775" description="Found with a frequency of 0.31 in Caucasians and 0.12 in African-Americans; exhibits impaired phosphorylation and desensitization by G protein-coupled receptor kinases; does not affect ligand-binding." evidence="5 6">
    <location>
        <begin position="301"/>
        <end position="303"/>
    </location>
</feature>
<feature type="sequence variant" id="VAR_033462" description="In dbSNP:rs1431850417.">
    <original>V</original>
    <variation>I</variation>
    <location>
        <position position="376"/>
    </location>
</feature>
<feature type="sequence variant" id="VAR_025100" description="In dbSNP:rs527655811." evidence="11">
    <original>V</original>
    <variation>G</variation>
    <location>
        <position position="379"/>
    </location>
</feature>
<feature type="sequence variant" id="VAR_033463" description="In dbSNP:rs29000569.">
    <original>V</original>
    <variation>I</variation>
    <location>
        <position position="379"/>
    </location>
</feature>
<feature type="sequence conflict" description="In Ref. 1; AAA51666 and 2; no nucleotide entry." evidence="12" ref="1 2">
    <original>QL</original>
    <variation>HV</variation>
    <location>
        <begin position="362"/>
        <end position="363"/>
    </location>
</feature>
<feature type="helix" evidence="13">
    <location>
        <begin position="12"/>
        <end position="38"/>
    </location>
</feature>
<feature type="turn" evidence="13">
    <location>
        <begin position="46"/>
        <end position="48"/>
    </location>
</feature>
<feature type="helix" evidence="13">
    <location>
        <begin position="49"/>
        <end position="73"/>
    </location>
</feature>
<feature type="helix" evidence="13">
    <location>
        <begin position="86"/>
        <end position="115"/>
    </location>
</feature>
<feature type="helix" evidence="13">
    <location>
        <begin position="117"/>
        <end position="121"/>
    </location>
</feature>
<feature type="helix" evidence="13">
    <location>
        <begin position="126"/>
        <end position="144"/>
    </location>
</feature>
<feature type="turn" evidence="13">
    <location>
        <begin position="146"/>
        <end position="148"/>
    </location>
</feature>
<feature type="helix" evidence="13">
    <location>
        <begin position="171"/>
        <end position="180"/>
    </location>
</feature>
<feature type="helix" evidence="13">
    <location>
        <begin position="182"/>
        <end position="202"/>
    </location>
</feature>
<feature type="helix" evidence="13">
    <location>
        <begin position="363"/>
        <end position="392"/>
    </location>
</feature>
<feature type="helix" evidence="13">
    <location>
        <begin position="407"/>
        <end position="427"/>
    </location>
</feature>
<feature type="helix" evidence="13">
    <location>
        <begin position="431"/>
        <end position="441"/>
    </location>
</feature>
<organism>
    <name type="scientific">Homo sapiens</name>
    <name type="common">Human</name>
    <dbReference type="NCBI Taxonomy" id="9606"/>
    <lineage>
        <taxon>Eukaryota</taxon>
        <taxon>Metazoa</taxon>
        <taxon>Chordata</taxon>
        <taxon>Craniata</taxon>
        <taxon>Vertebrata</taxon>
        <taxon>Euteleostomi</taxon>
        <taxon>Mammalia</taxon>
        <taxon>Eutheria</taxon>
        <taxon>Euarchontoglires</taxon>
        <taxon>Primates</taxon>
        <taxon>Haplorrhini</taxon>
        <taxon>Catarrhini</taxon>
        <taxon>Hominidae</taxon>
        <taxon>Homo</taxon>
    </lineage>
</organism>
<evidence type="ECO:0000250" key="1"/>
<evidence type="ECO:0000255" key="2"/>
<evidence type="ECO:0000255" key="3">
    <source>
        <dbReference type="PROSITE-ProRule" id="PRU00521"/>
    </source>
</evidence>
<evidence type="ECO:0000256" key="4">
    <source>
        <dbReference type="SAM" id="MobiDB-lite"/>
    </source>
</evidence>
<evidence type="ECO:0000269" key="5">
    <source>
    </source>
</evidence>
<evidence type="ECO:0000269" key="6">
    <source>
    </source>
</evidence>
<evidence type="ECO:0000269" key="7">
    <source>
    </source>
</evidence>
<evidence type="ECO:0000269" key="8">
    <source>
    </source>
</evidence>
<evidence type="ECO:0000269" key="9">
    <source>
    </source>
</evidence>
<evidence type="ECO:0000269" key="10">
    <source>
    </source>
</evidence>
<evidence type="ECO:0000269" key="11">
    <source ref="6"/>
</evidence>
<evidence type="ECO:0000305" key="12"/>
<evidence type="ECO:0007829" key="13">
    <source>
        <dbReference type="PDB" id="6K41"/>
    </source>
</evidence>
<sequence>MDHQDPYSVQATAAIAAAITFLILFTIFGNALVILAVLTSRSLRAPQNLFLVSLAAADILVATLIIPFSLANELLGYWYFRRTWCEVYLALDVLFCTSSIVHLCAISLDRYWAVSRALEYNSKRTPRRIKCIILTVWLIAAVISLPPLIYKGDQGPQPRGRPQCKLNQEAWYILASSIGSFFAPCLIMILVYLRIYLIAKRSNRRGPRAKGGPGQGESKQPRPDHGGALASAKLPALASVASAREVNGHSKSTGEKEEGETPEDTGTRALPPSWAALPNSGQGQKEGVCGASPEDEAEEEEEEEEEEEECEPQAVPVSPASACSPPLQQPQGSRVLATLRGQVLLGRGVGAIGGQWWRRRAQLTREKRFTFVLAVVIGVFVLCWFPFFFSYSLGAICPKHCKVPHGLFQFFFWIGYCNSSLNPVIYTIFNQDFRRAFRRILCRPWTQTAW</sequence>
<reference key="1">
    <citation type="journal article" date="1990" name="Proc. Natl. Acad. Sci. U.S.A.">
        <title>Expansion of the alpha 2-adrenergic receptor family: cloning and characterization of a human alpha 2-adrenergic receptor subtype, the gene for which is located on chromosome 2.</title>
        <authorList>
            <person name="Lomasney J.W."/>
            <person name="Lorenz W."/>
            <person name="Allen L.F."/>
            <person name="King K."/>
            <person name="Regan J.W."/>
            <person name="Yang-Feng T.L."/>
            <person name="Caron M.G."/>
            <person name="Lefkowitz R.J."/>
        </authorList>
    </citation>
    <scope>NUCLEOTIDE SEQUENCE [GENOMIC DNA]</scope>
</reference>
<reference key="2">
    <citation type="journal article" date="1990" name="Mol. Pharmacol.">
        <title>Cloning, expression, and pharmacological characterization of a human alpha 2B-adrenergic receptor.</title>
        <authorList>
            <person name="Weinshank R.L."/>
            <person name="Zgombick J.M."/>
            <person name="Macchi M."/>
            <person name="Adham N."/>
            <person name="Lichtblau H."/>
            <person name="Branchek T.A."/>
            <person name="Hartig P.R."/>
        </authorList>
    </citation>
    <scope>NUCLEOTIDE SEQUENCE [GENOMIC DNA]</scope>
</reference>
<reference key="3">
    <citation type="journal article" date="2001" name="J. Biol. Chem.">
        <title>Polymorphic deletion of three intracellular acidic residues of the alpha 2B-adrenergic receptor decreases G protein-coupled receptor kinase-mediated phosphorylation and desensitization.</title>
        <authorList>
            <person name="Small K.M."/>
            <person name="Brown K.M."/>
            <person name="Forbes S.L."/>
            <person name="Liggett S.B."/>
        </authorList>
    </citation>
    <scope>NUCLEOTIDE SEQUENCE [GENOMIC DNA]</scope>
    <scope>VARIANT 301-GLU--GLU-303 DEL</scope>
</reference>
<reference key="4">
    <citation type="journal article" date="2004" name="Biochem. Pharmacol.">
        <title>Cloning, characterisation and identification of several polymorphisms in the promoter region of the human alpha2B-adrenergic receptor gene.</title>
        <authorList>
            <person name="Cayla C."/>
            <person name="Heinonen P."/>
            <person name="Viikari L."/>
            <person name="Schaak S."/>
            <person name="Snapir A."/>
            <person name="Bouloumie A."/>
            <person name="Karvonen M.K."/>
            <person name="Pesonen U."/>
            <person name="Scheinin M."/>
            <person name="Paris H."/>
        </authorList>
    </citation>
    <scope>NUCLEOTIDE SEQUENCE [GENOMIC DNA]</scope>
</reference>
<reference key="5">
    <citation type="submission" date="2004-02" db="EMBL/GenBank/DDBJ databases">
        <title>Isolation of complete coding sequence for adrenergic receptor alpha 2B (ADRA2B).</title>
        <authorList>
            <person name="Kopatz S.A."/>
            <person name="Aronstam R.S."/>
            <person name="Sharma S.V."/>
        </authorList>
    </citation>
    <scope>NUCLEOTIDE SEQUENCE [GENOMIC DNA]</scope>
</reference>
<reference key="6">
    <citation type="submission" date="2007-12" db="EMBL/GenBank/DDBJ databases">
        <authorList>
            <consortium name="SeattleSNPs variation discovery resource"/>
        </authorList>
    </citation>
    <scope>NUCLEOTIDE SEQUENCE [GENOMIC DNA]</scope>
    <scope>VARIANTS ALA-211 AND GLY-379</scope>
    <scope>FRAMESHIFT POLYMORPHISM</scope>
</reference>
<reference key="7">
    <citation type="journal article" date="2005" name="Nature">
        <title>Generation and annotation of the DNA sequences of human chromosomes 2 and 4.</title>
        <authorList>
            <person name="Hillier L.W."/>
            <person name="Graves T.A."/>
            <person name="Fulton R.S."/>
            <person name="Fulton L.A."/>
            <person name="Pepin K.H."/>
            <person name="Minx P."/>
            <person name="Wagner-McPherson C."/>
            <person name="Layman D."/>
            <person name="Wylie K."/>
            <person name="Sekhon M."/>
            <person name="Becker M.C."/>
            <person name="Fewell G.A."/>
            <person name="Delehaunty K.D."/>
            <person name="Miner T.L."/>
            <person name="Nash W.E."/>
            <person name="Kremitzki C."/>
            <person name="Oddy L."/>
            <person name="Du H."/>
            <person name="Sun H."/>
            <person name="Bradshaw-Cordum H."/>
            <person name="Ali J."/>
            <person name="Carter J."/>
            <person name="Cordes M."/>
            <person name="Harris A."/>
            <person name="Isak A."/>
            <person name="van Brunt A."/>
            <person name="Nguyen C."/>
            <person name="Du F."/>
            <person name="Courtney L."/>
            <person name="Kalicki J."/>
            <person name="Ozersky P."/>
            <person name="Abbott S."/>
            <person name="Armstrong J."/>
            <person name="Belter E.A."/>
            <person name="Caruso L."/>
            <person name="Cedroni M."/>
            <person name="Cotton M."/>
            <person name="Davidson T."/>
            <person name="Desai A."/>
            <person name="Elliott G."/>
            <person name="Erb T."/>
            <person name="Fronick C."/>
            <person name="Gaige T."/>
            <person name="Haakenson W."/>
            <person name="Haglund K."/>
            <person name="Holmes A."/>
            <person name="Harkins R."/>
            <person name="Kim K."/>
            <person name="Kruchowski S.S."/>
            <person name="Strong C.M."/>
            <person name="Grewal N."/>
            <person name="Goyea E."/>
            <person name="Hou S."/>
            <person name="Levy A."/>
            <person name="Martinka S."/>
            <person name="Mead K."/>
            <person name="McLellan M.D."/>
            <person name="Meyer R."/>
            <person name="Randall-Maher J."/>
            <person name="Tomlinson C."/>
            <person name="Dauphin-Kohlberg S."/>
            <person name="Kozlowicz-Reilly A."/>
            <person name="Shah N."/>
            <person name="Swearengen-Shahid S."/>
            <person name="Snider J."/>
            <person name="Strong J.T."/>
            <person name="Thompson J."/>
            <person name="Yoakum M."/>
            <person name="Leonard S."/>
            <person name="Pearman C."/>
            <person name="Trani L."/>
            <person name="Radionenko M."/>
            <person name="Waligorski J.E."/>
            <person name="Wang C."/>
            <person name="Rock S.M."/>
            <person name="Tin-Wollam A.-M."/>
            <person name="Maupin R."/>
            <person name="Latreille P."/>
            <person name="Wendl M.C."/>
            <person name="Yang S.-P."/>
            <person name="Pohl C."/>
            <person name="Wallis J.W."/>
            <person name="Spieth J."/>
            <person name="Bieri T.A."/>
            <person name="Berkowicz N."/>
            <person name="Nelson J.O."/>
            <person name="Osborne J."/>
            <person name="Ding L."/>
            <person name="Meyer R."/>
            <person name="Sabo A."/>
            <person name="Shotland Y."/>
            <person name="Sinha P."/>
            <person name="Wohldmann P.E."/>
            <person name="Cook L.L."/>
            <person name="Hickenbotham M.T."/>
            <person name="Eldred J."/>
            <person name="Williams D."/>
            <person name="Jones T.A."/>
            <person name="She X."/>
            <person name="Ciccarelli F.D."/>
            <person name="Izaurralde E."/>
            <person name="Taylor J."/>
            <person name="Schmutz J."/>
            <person name="Myers R.M."/>
            <person name="Cox D.R."/>
            <person name="Huang X."/>
            <person name="McPherson J.D."/>
            <person name="Mardis E.R."/>
            <person name="Clifton S.W."/>
            <person name="Warren W.C."/>
            <person name="Chinwalla A.T."/>
            <person name="Eddy S.R."/>
            <person name="Marra M.A."/>
            <person name="Ovcharenko I."/>
            <person name="Furey T.S."/>
            <person name="Miller W."/>
            <person name="Eichler E.E."/>
            <person name="Bork P."/>
            <person name="Suyama M."/>
            <person name="Torrents D."/>
            <person name="Waterston R.H."/>
            <person name="Wilson R.K."/>
        </authorList>
    </citation>
    <scope>NUCLEOTIDE SEQUENCE [LARGE SCALE GENOMIC DNA]</scope>
    <scope>VARIANT 301-GLU--GLU-303 DEL</scope>
</reference>
<reference key="8">
    <citation type="submission" date="2005-09" db="EMBL/GenBank/DDBJ databases">
        <authorList>
            <person name="Mural R.J."/>
            <person name="Istrail S."/>
            <person name="Sutton G."/>
            <person name="Florea L."/>
            <person name="Halpern A.L."/>
            <person name="Mobarry C.M."/>
            <person name="Lippert R."/>
            <person name="Walenz B."/>
            <person name="Shatkay H."/>
            <person name="Dew I."/>
            <person name="Miller J.R."/>
            <person name="Flanigan M.J."/>
            <person name="Edwards N.J."/>
            <person name="Bolanos R."/>
            <person name="Fasulo D."/>
            <person name="Halldorsson B.V."/>
            <person name="Hannenhalli S."/>
            <person name="Turner R."/>
            <person name="Yooseph S."/>
            <person name="Lu F."/>
            <person name="Nusskern D.R."/>
            <person name="Shue B.C."/>
            <person name="Zheng X.H."/>
            <person name="Zhong F."/>
            <person name="Delcher A.L."/>
            <person name="Huson D.H."/>
            <person name="Kravitz S.A."/>
            <person name="Mouchard L."/>
            <person name="Reinert K."/>
            <person name="Remington K.A."/>
            <person name="Clark A.G."/>
            <person name="Waterman M.S."/>
            <person name="Eichler E.E."/>
            <person name="Adams M.D."/>
            <person name="Hunkapiller M.W."/>
            <person name="Myers E.W."/>
            <person name="Venter J.C."/>
        </authorList>
    </citation>
    <scope>NUCLEOTIDE SEQUENCE [LARGE SCALE GENOMIC DNA]</scope>
</reference>
<reference key="9">
    <citation type="journal article" date="2004" name="Genome Res.">
        <title>The status, quality, and expansion of the NIH full-length cDNA project: the Mammalian Gene Collection (MGC).</title>
        <authorList>
            <consortium name="The MGC Project Team"/>
        </authorList>
    </citation>
    <scope>NUCLEOTIDE SEQUENCE [LARGE SCALE MRNA]</scope>
</reference>
<reference key="10">
    <citation type="journal article" date="1990" name="Biochem. Biophys. Res. Commun.">
        <title>In vitro amplification by polymerase chain reaction of a partial gene encoding the third subtype of alpha-2 adrenergic receptor in humans.</title>
        <authorList>
            <person name="Chang A.C."/>
            <person name="Ho T.F."/>
            <person name="Chang N.-C.A."/>
        </authorList>
    </citation>
    <scope>NUCLEOTIDE SEQUENCE [GENOMIC DNA] OF 95-389</scope>
</reference>
<reference key="11">
    <citation type="journal article" date="2012" name="J. Biol. Chem.">
        <title>Rab26 modulates the cell surface transport of alpha2-adrenergic receptors from the Golgi.</title>
        <authorList>
            <person name="Li C."/>
            <person name="Fan Y."/>
            <person name="Lan T.H."/>
            <person name="Lambert N.A."/>
            <person name="Wu G."/>
        </authorList>
    </citation>
    <scope>FUNCTION</scope>
    <scope>INTERACTION WITH RAB26</scope>
    <scope>SUBCELLULAR LOCATION</scope>
</reference>
<reference key="12">
    <citation type="journal article" date="2014" name="Ann. Neurol.">
        <title>The alpha2B-adrenergic receptor is mutant in cortical myoclonus and epilepsy.</title>
        <authorList>
            <person name="De Fusco M."/>
            <person name="Vago R."/>
            <person name="Striano P."/>
            <person name="Di Bonaventura C."/>
            <person name="Zara F."/>
            <person name="Mei D."/>
            <person name="Kim M.S."/>
            <person name="Muallem S."/>
            <person name="Chen Y."/>
            <person name="Wang Q."/>
            <person name="Guerrini R."/>
            <person name="Casari G."/>
        </authorList>
    </citation>
    <scope>INTERACTION WITH PPP1R9B</scope>
    <scope>INVOLVEMENT IN FAME2</scope>
    <scope>VARIANT FAME2 225-HIS--LEU-229 DELINS GLN-PHE-GLY-ARG</scope>
    <scope>CHARACTERIZATION OF VARIANT FAME2 225-HIS--LEU-229 DELINS GLN-PHE-GLY-ARG</scope>
</reference>
<reference key="13">
    <citation type="journal article" date="2016" name="Sci. Rep.">
        <title>Regulation of alpha2B-Adrenergic Receptor Cell Surface Transport by GGA1 and GGA2.</title>
        <authorList>
            <person name="Zhang M."/>
            <person name="Huang W."/>
            <person name="Gao J."/>
            <person name="Terry A.V."/>
            <person name="Wu G."/>
        </authorList>
    </citation>
    <scope>SUBCELLULAR LOCATION</scope>
    <scope>INTERACTION WITH GGA1 AND GGA2</scope>
</reference>
<reference key="14">
    <citation type="journal article" date="2016" name="Mol. Cell. Biol.">
        <title>GGA3 Interacts with a G Protein-Coupled Receptor and Modulates Its Cell Surface Export.</title>
        <authorList>
            <person name="Zhang M."/>
            <person name="Davis J.E."/>
            <person name="Li C."/>
            <person name="Gao J."/>
            <person name="Huang W."/>
            <person name="Lambert N.A."/>
            <person name="Terry A.V. Jr."/>
            <person name="Wu G."/>
        </authorList>
    </citation>
    <scope>SUBCELLULAR LOCATION</scope>
    <scope>INTERACTION WITH GGA3</scope>
</reference>
<keyword id="KW-0002">3D-structure</keyword>
<keyword id="KW-1003">Cell membrane</keyword>
<keyword id="KW-1015">Disulfide bond</keyword>
<keyword id="KW-0887">Epilepsy</keyword>
<keyword id="KW-0297">G-protein coupled receptor</keyword>
<keyword id="KW-0449">Lipoprotein</keyword>
<keyword id="KW-0472">Membrane</keyword>
<keyword id="KW-0564">Palmitate</keyword>
<keyword id="KW-1267">Proteomics identification</keyword>
<keyword id="KW-0675">Receptor</keyword>
<keyword id="KW-1185">Reference proteome</keyword>
<keyword id="KW-0807">Transducer</keyword>
<keyword id="KW-0812">Transmembrane</keyword>
<keyword id="KW-1133">Transmembrane helix</keyword>
<gene>
    <name type="primary">ADRA2B</name>
    <name type="synonym">ADRA2L1</name>
    <name type="synonym">ADRA2RL1</name>
</gene>
<proteinExistence type="evidence at protein level"/>
<comment type="function">
    <text evidence="7">Alpha-2 adrenergic receptors mediate the catecholamine-induced inhibition of adenylate cyclase through the action of G proteins. The rank order of potency for agonists of this receptor is clonidine &gt; norepinephrine &gt; epinephrine = oxymetazoline &gt; dopamine &gt; p-tyramine = phenylephrine &gt; serotonin &gt; p-synephrine / p-octopamine. For antagonists, the rank order is yohimbine &gt; chlorpromazine &gt; phentolamine &gt; mianserine &gt; spiperone &gt; prazosin &gt; alprenolol &gt; propanolol &gt; pindolol.</text>
</comment>
<comment type="subunit">
    <text evidence="7 8 9 10">Interacts with RAB26 (PubMed:23105096). Interacts with PPP1R9B (PubMed:24114805). Interacts with GGA1, GGA2 and GGA3 (PubMed:26811329, PubMed:27901063).</text>
</comment>
<comment type="interaction">
    <interactant intactId="EBI-9077302">
        <id>P18089</id>
    </interactant>
    <interactant intactId="EBI-958239">
        <id>Q9ULW5</id>
        <label>RAB26</label>
    </interactant>
    <organismsDiffer>false</organismsDiffer>
    <experiments>4</experiments>
</comment>
<comment type="subcellular location">
    <subcellularLocation>
        <location evidence="7 9 10">Cell membrane</location>
        <topology evidence="7">Multi-pass membrane protein</topology>
    </subcellularLocation>
    <text evidence="7 9 10">Interaction with RAB26, GGA1, GGA2 and GGA3 mediates transport from the Golgi to the cell membrane.</text>
</comment>
<comment type="polymorphism">
    <text evidence="11">A rare polymorphic frameshift in position 451 produces a protein of 545 residues.</text>
</comment>
<comment type="disease" evidence="8">
    <disease id="DI-04469">
        <name>Epilepsy, familial adult myoclonic, 2</name>
        <acronym>FAME2</acronym>
        <description>A form of familial myoclonic epilepsy, a neurologic disorder characterized by cortical hand tremors, myoclonic jerks and occasional generalized or focal seizures with a non-progressive or very slowly progressive disease course. Usually, myoclonic tremor is the presenting symptom, characterized by tremulous finger movements and myoclonic jerks of the limbs increased by action and posture. In a minority of patients, seizures are the presenting symptom. Some patients exhibit mild cognitive impairment. FAME2 inheritance is autosomal dominant.</description>
        <dbReference type="MIM" id="607876"/>
    </disease>
    <text>The disease is caused by variants affecting the gene represented in this entry.</text>
</comment>
<comment type="similarity">
    <text evidence="3">Belongs to the G-protein coupled receptor 1 family. Adrenergic receptor subfamily. ADRA2B sub-subfamily.</text>
</comment>
<name>ADA2B_HUMAN</name>
<accession>P18089</accession>
<accession>A2RUS0</accession>
<accession>Q4TUH9</accession>
<accession>Q53RF2</accession>
<accession>Q9BZK0</accession>